<proteinExistence type="inferred from homology"/>
<feature type="chain" id="PRO_1000129598" description="Glutamate--cysteine ligase">
    <location>
        <begin position="1"/>
        <end position="526"/>
    </location>
</feature>
<protein>
    <recommendedName>
        <fullName evidence="1">Glutamate--cysteine ligase</fullName>
        <ecNumber evidence="1">6.3.2.2</ecNumber>
    </recommendedName>
    <alternativeName>
        <fullName evidence="1">Gamma-ECS</fullName>
        <shortName evidence="1">GCS</shortName>
    </alternativeName>
    <alternativeName>
        <fullName evidence="1">Gamma-glutamylcysteine synthetase</fullName>
    </alternativeName>
</protein>
<gene>
    <name evidence="1" type="primary">gshA</name>
    <name type="ordered locus">PMI0378</name>
</gene>
<organism>
    <name type="scientific">Proteus mirabilis (strain HI4320)</name>
    <dbReference type="NCBI Taxonomy" id="529507"/>
    <lineage>
        <taxon>Bacteria</taxon>
        <taxon>Pseudomonadati</taxon>
        <taxon>Pseudomonadota</taxon>
        <taxon>Gammaproteobacteria</taxon>
        <taxon>Enterobacterales</taxon>
        <taxon>Morganellaceae</taxon>
        <taxon>Proteus</taxon>
    </lineage>
</organism>
<name>GSH1_PROMH</name>
<comment type="catalytic activity">
    <reaction evidence="1">
        <text>L-cysteine + L-glutamate + ATP = gamma-L-glutamyl-L-cysteine + ADP + phosphate + H(+)</text>
        <dbReference type="Rhea" id="RHEA:13285"/>
        <dbReference type="ChEBI" id="CHEBI:15378"/>
        <dbReference type="ChEBI" id="CHEBI:29985"/>
        <dbReference type="ChEBI" id="CHEBI:30616"/>
        <dbReference type="ChEBI" id="CHEBI:35235"/>
        <dbReference type="ChEBI" id="CHEBI:43474"/>
        <dbReference type="ChEBI" id="CHEBI:58173"/>
        <dbReference type="ChEBI" id="CHEBI:456216"/>
        <dbReference type="EC" id="6.3.2.2"/>
    </reaction>
</comment>
<comment type="pathway">
    <text evidence="1">Sulfur metabolism; glutathione biosynthesis; glutathione from L-cysteine and L-glutamate: step 1/2.</text>
</comment>
<comment type="similarity">
    <text evidence="1">Belongs to the glutamate--cysteine ligase type 1 family. Type 1 subfamily.</text>
</comment>
<accession>B4EUV9</accession>
<dbReference type="EC" id="6.3.2.2" evidence="1"/>
<dbReference type="EMBL" id="AM942759">
    <property type="protein sequence ID" value="CAR40970.1"/>
    <property type="molecule type" value="Genomic_DNA"/>
</dbReference>
<dbReference type="RefSeq" id="WP_004244777.1">
    <property type="nucleotide sequence ID" value="NC_010554.1"/>
</dbReference>
<dbReference type="SMR" id="B4EUV9"/>
<dbReference type="EnsemblBacteria" id="CAR40970">
    <property type="protein sequence ID" value="CAR40970"/>
    <property type="gene ID" value="PMI0378"/>
</dbReference>
<dbReference type="GeneID" id="6800192"/>
<dbReference type="KEGG" id="pmr:PMI0378"/>
<dbReference type="eggNOG" id="COG2918">
    <property type="taxonomic scope" value="Bacteria"/>
</dbReference>
<dbReference type="HOGENOM" id="CLU_020728_3_0_6"/>
<dbReference type="UniPathway" id="UPA00142">
    <property type="reaction ID" value="UER00209"/>
</dbReference>
<dbReference type="Proteomes" id="UP000008319">
    <property type="component" value="Chromosome"/>
</dbReference>
<dbReference type="GO" id="GO:0005829">
    <property type="term" value="C:cytosol"/>
    <property type="evidence" value="ECO:0007669"/>
    <property type="project" value="TreeGrafter"/>
</dbReference>
<dbReference type="GO" id="GO:0005524">
    <property type="term" value="F:ATP binding"/>
    <property type="evidence" value="ECO:0007669"/>
    <property type="project" value="UniProtKB-KW"/>
</dbReference>
<dbReference type="GO" id="GO:0004357">
    <property type="term" value="F:glutamate-cysteine ligase activity"/>
    <property type="evidence" value="ECO:0007669"/>
    <property type="project" value="UniProtKB-UniRule"/>
</dbReference>
<dbReference type="GO" id="GO:0046872">
    <property type="term" value="F:metal ion binding"/>
    <property type="evidence" value="ECO:0007669"/>
    <property type="project" value="TreeGrafter"/>
</dbReference>
<dbReference type="GO" id="GO:0006750">
    <property type="term" value="P:glutathione biosynthetic process"/>
    <property type="evidence" value="ECO:0007669"/>
    <property type="project" value="UniProtKB-UniRule"/>
</dbReference>
<dbReference type="FunFam" id="3.30.590.20:FF:000001">
    <property type="entry name" value="Glutamate--cysteine ligase"/>
    <property type="match status" value="1"/>
</dbReference>
<dbReference type="Gene3D" id="3.30.590.20">
    <property type="match status" value="1"/>
</dbReference>
<dbReference type="HAMAP" id="MF_00578">
    <property type="entry name" value="Glu_cys_ligase"/>
    <property type="match status" value="1"/>
</dbReference>
<dbReference type="InterPro" id="IPR014746">
    <property type="entry name" value="Gln_synth/guanido_kin_cat_dom"/>
</dbReference>
<dbReference type="InterPro" id="IPR007370">
    <property type="entry name" value="Glu_cys_ligase"/>
</dbReference>
<dbReference type="InterPro" id="IPR006334">
    <property type="entry name" value="Glut_cys_ligase"/>
</dbReference>
<dbReference type="NCBIfam" id="TIGR01434">
    <property type="entry name" value="glu_cys_ligase"/>
    <property type="match status" value="1"/>
</dbReference>
<dbReference type="PANTHER" id="PTHR38761">
    <property type="entry name" value="GLUTAMATE--CYSTEINE LIGASE"/>
    <property type="match status" value="1"/>
</dbReference>
<dbReference type="PANTHER" id="PTHR38761:SF1">
    <property type="entry name" value="GLUTAMATE--CYSTEINE LIGASE"/>
    <property type="match status" value="1"/>
</dbReference>
<dbReference type="Pfam" id="PF04262">
    <property type="entry name" value="Glu_cys_ligase"/>
    <property type="match status" value="1"/>
</dbReference>
<dbReference type="SUPFAM" id="SSF55931">
    <property type="entry name" value="Glutamine synthetase/guanido kinase"/>
    <property type="match status" value="1"/>
</dbReference>
<sequence length="526" mass="59348">MIPDVSKALSWLEAHPKVLCGIHRGIERETLRVTPDGHLAATGHPVELGKSLTHKWITTDFAESLLEFITPVDDNIDHTLHFLSDLHRYTARHLTNERMWPMSMPCFIEAEDKITLAQFGTSNVGRFKTLYREGLKNRYGALMQTISGVHYNFSLPIEFWQAWANITDEETGKEAISDGYLRLIRNYYRFGWIIPFFFGASPAICGSFLKGRKTNLPFENTPKGAKYLPYATSLRLSDLGYTNKSQSDLDITFNHLETYVKGLKKAIHKPSEEFAKLGVKKDGKYIQLNTNVLQIENELYAPIRPKRVVKGDESPSDALLRGGIEYIEVRSLDINPFTPIGVDETQIRFLDLFLIWCVLADAPEMNAEELACCRANWNNVILEGRKPGQVIGMGCGERKEPLAQVGKALFADLQRVAKVLDSCSGTKYLEVCLKLEEMFDNPQLTFSGRLLEKIKAQGIGGYGLSLAEEYHQQLVNTAYEVLTDDAFEHERISSIKRQADLEKSDTISFDEYLKLHAGPNNDGVAS</sequence>
<evidence type="ECO:0000255" key="1">
    <source>
        <dbReference type="HAMAP-Rule" id="MF_00578"/>
    </source>
</evidence>
<keyword id="KW-0067">ATP-binding</keyword>
<keyword id="KW-0317">Glutathione biosynthesis</keyword>
<keyword id="KW-0436">Ligase</keyword>
<keyword id="KW-0547">Nucleotide-binding</keyword>
<keyword id="KW-1185">Reference proteome</keyword>
<reference key="1">
    <citation type="journal article" date="2008" name="J. Bacteriol.">
        <title>Complete genome sequence of uropathogenic Proteus mirabilis, a master of both adherence and motility.</title>
        <authorList>
            <person name="Pearson M.M."/>
            <person name="Sebaihia M."/>
            <person name="Churcher C."/>
            <person name="Quail M.A."/>
            <person name="Seshasayee A.S."/>
            <person name="Luscombe N.M."/>
            <person name="Abdellah Z."/>
            <person name="Arrosmith C."/>
            <person name="Atkin B."/>
            <person name="Chillingworth T."/>
            <person name="Hauser H."/>
            <person name="Jagels K."/>
            <person name="Moule S."/>
            <person name="Mungall K."/>
            <person name="Norbertczak H."/>
            <person name="Rabbinowitsch E."/>
            <person name="Walker D."/>
            <person name="Whithead S."/>
            <person name="Thomson N.R."/>
            <person name="Rather P.N."/>
            <person name="Parkhill J."/>
            <person name="Mobley H.L.T."/>
        </authorList>
    </citation>
    <scope>NUCLEOTIDE SEQUENCE [LARGE SCALE GENOMIC DNA]</scope>
    <source>
        <strain>HI4320</strain>
    </source>
</reference>